<name>GRDN_HUMAN</name>
<keyword id="KW-0002">3D-structure</keyword>
<keyword id="KW-0025">Alternative splicing</keyword>
<keyword id="KW-1003">Cell membrane</keyword>
<keyword id="KW-0966">Cell projection</keyword>
<keyword id="KW-0970">Cilium biogenesis/degradation</keyword>
<keyword id="KW-0175">Coiled coil</keyword>
<keyword id="KW-0963">Cytoplasm</keyword>
<keyword id="KW-0968">Cytoplasmic vesicle</keyword>
<keyword id="KW-0206">Cytoskeleton</keyword>
<keyword id="KW-0887">Epilepsy</keyword>
<keyword id="KW-0344">Guanine-nucleotide releasing factor</keyword>
<keyword id="KW-0991">Intellectual disability</keyword>
<keyword id="KW-0472">Membrane</keyword>
<keyword id="KW-0523">Neurodegeneration</keyword>
<keyword id="KW-0524">Neurogenesis</keyword>
<keyword id="KW-0597">Phosphoprotein</keyword>
<keyword id="KW-1267">Proteomics identification</keyword>
<keyword id="KW-1185">Reference proteome</keyword>
<reference evidence="25 28" key="1">
    <citation type="journal article" date="2005" name="Dev. Cell">
        <title>Akt/PKB regulates actin organization and cell motility via Girdin/APE.</title>
        <authorList>
            <person name="Enomoto A."/>
            <person name="Murakami H."/>
            <person name="Asai N."/>
            <person name="Morone N."/>
            <person name="Watanabe T."/>
            <person name="Kawai K."/>
            <person name="Murakumo Y."/>
            <person name="Usukura J."/>
            <person name="Kaibuchi K."/>
            <person name="Takahashi M."/>
        </authorList>
    </citation>
    <scope>NUCLEOTIDE SEQUENCE [MRNA] (ISOFORM 3)</scope>
    <scope>FUNCTION</scope>
    <scope>INTERACTION WITH AKT1</scope>
    <scope>INTERACTION WITH PHOSPHOINOSITIDES</scope>
    <scope>HOMOOLIGOMERIZATION</scope>
    <scope>SUBCELLULAR LOCATION</scope>
    <scope>TISSUE SPECIFICITY</scope>
    <scope>PHOSPHORYLATION AT SER-1417 BY AKT1</scope>
    <scope>MUTAGENESIS OF SER-1417</scope>
    <source>
        <tissue evidence="8">Fetal brain</tissue>
    </source>
</reference>
<reference evidence="25" key="2">
    <citation type="journal article" date="2005" name="Traffic">
        <title>A novel hook-related protein family and the characterization of hook-related protein 1.</title>
        <authorList>
            <person name="Simpson F."/>
            <person name="Martin S."/>
            <person name="Evans T.M."/>
            <person name="Kerr M."/>
            <person name="James D.E."/>
            <person name="Parton R.G."/>
            <person name="Teasdale R.D."/>
            <person name="Wicking C."/>
        </authorList>
    </citation>
    <scope>NUCLEOTIDE SEQUENCE [MRNA] (ISOFORM 2)</scope>
    <scope>FUNCTION</scope>
    <scope>SUBCELLULAR LOCATION</scope>
    <scope>ALTERNATIVE SPLICING</scope>
    <source>
        <tissue evidence="7">Fetal brain</tissue>
    </source>
</reference>
<reference evidence="25 29" key="3">
    <citation type="submission" date="2003-11" db="EMBL/GenBank/DDBJ databases">
        <authorList>
            <person name="Anai M."/>
        </authorList>
    </citation>
    <scope>NUCLEOTIDE SEQUENCE [MRNA] (ISOFORM 2)</scope>
</reference>
<reference evidence="27" key="4">
    <citation type="journal article" date="2005" name="Nature">
        <title>Generation and annotation of the DNA sequences of human chromosomes 2 and 4.</title>
        <authorList>
            <person name="Hillier L.W."/>
            <person name="Graves T.A."/>
            <person name="Fulton R.S."/>
            <person name="Fulton L.A."/>
            <person name="Pepin K.H."/>
            <person name="Minx P."/>
            <person name="Wagner-McPherson C."/>
            <person name="Layman D."/>
            <person name="Wylie K."/>
            <person name="Sekhon M."/>
            <person name="Becker M.C."/>
            <person name="Fewell G.A."/>
            <person name="Delehaunty K.D."/>
            <person name="Miner T.L."/>
            <person name="Nash W.E."/>
            <person name="Kremitzki C."/>
            <person name="Oddy L."/>
            <person name="Du H."/>
            <person name="Sun H."/>
            <person name="Bradshaw-Cordum H."/>
            <person name="Ali J."/>
            <person name="Carter J."/>
            <person name="Cordes M."/>
            <person name="Harris A."/>
            <person name="Isak A."/>
            <person name="van Brunt A."/>
            <person name="Nguyen C."/>
            <person name="Du F."/>
            <person name="Courtney L."/>
            <person name="Kalicki J."/>
            <person name="Ozersky P."/>
            <person name="Abbott S."/>
            <person name="Armstrong J."/>
            <person name="Belter E.A."/>
            <person name="Caruso L."/>
            <person name="Cedroni M."/>
            <person name="Cotton M."/>
            <person name="Davidson T."/>
            <person name="Desai A."/>
            <person name="Elliott G."/>
            <person name="Erb T."/>
            <person name="Fronick C."/>
            <person name="Gaige T."/>
            <person name="Haakenson W."/>
            <person name="Haglund K."/>
            <person name="Holmes A."/>
            <person name="Harkins R."/>
            <person name="Kim K."/>
            <person name="Kruchowski S.S."/>
            <person name="Strong C.M."/>
            <person name="Grewal N."/>
            <person name="Goyea E."/>
            <person name="Hou S."/>
            <person name="Levy A."/>
            <person name="Martinka S."/>
            <person name="Mead K."/>
            <person name="McLellan M.D."/>
            <person name="Meyer R."/>
            <person name="Randall-Maher J."/>
            <person name="Tomlinson C."/>
            <person name="Dauphin-Kohlberg S."/>
            <person name="Kozlowicz-Reilly A."/>
            <person name="Shah N."/>
            <person name="Swearengen-Shahid S."/>
            <person name="Snider J."/>
            <person name="Strong J.T."/>
            <person name="Thompson J."/>
            <person name="Yoakum M."/>
            <person name="Leonard S."/>
            <person name="Pearman C."/>
            <person name="Trani L."/>
            <person name="Radionenko M."/>
            <person name="Waligorski J.E."/>
            <person name="Wang C."/>
            <person name="Rock S.M."/>
            <person name="Tin-Wollam A.-M."/>
            <person name="Maupin R."/>
            <person name="Latreille P."/>
            <person name="Wendl M.C."/>
            <person name="Yang S.-P."/>
            <person name="Pohl C."/>
            <person name="Wallis J.W."/>
            <person name="Spieth J."/>
            <person name="Bieri T.A."/>
            <person name="Berkowicz N."/>
            <person name="Nelson J.O."/>
            <person name="Osborne J."/>
            <person name="Ding L."/>
            <person name="Meyer R."/>
            <person name="Sabo A."/>
            <person name="Shotland Y."/>
            <person name="Sinha P."/>
            <person name="Wohldmann P.E."/>
            <person name="Cook L.L."/>
            <person name="Hickenbotham M.T."/>
            <person name="Eldred J."/>
            <person name="Williams D."/>
            <person name="Jones T.A."/>
            <person name="She X."/>
            <person name="Ciccarelli F.D."/>
            <person name="Izaurralde E."/>
            <person name="Taylor J."/>
            <person name="Schmutz J."/>
            <person name="Myers R.M."/>
            <person name="Cox D.R."/>
            <person name="Huang X."/>
            <person name="McPherson J.D."/>
            <person name="Mardis E.R."/>
            <person name="Clifton S.W."/>
            <person name="Warren W.C."/>
            <person name="Chinwalla A.T."/>
            <person name="Eddy S.R."/>
            <person name="Marra M.A."/>
            <person name="Ovcharenko I."/>
            <person name="Furey T.S."/>
            <person name="Miller W."/>
            <person name="Eichler E.E."/>
            <person name="Bork P."/>
            <person name="Suyama M."/>
            <person name="Torrents D."/>
            <person name="Waterston R.H."/>
            <person name="Wilson R.K."/>
        </authorList>
    </citation>
    <scope>NUCLEOTIDE SEQUENCE [LARGE SCALE GENOMIC DNA]</scope>
</reference>
<reference evidence="25 26" key="5">
    <citation type="journal article" date="2004" name="Genome Res.">
        <title>The status, quality, and expansion of the NIH full-length cDNA project: the Mammalian Gene Collection (MGC).</title>
        <authorList>
            <consortium name="The MGC Project Team"/>
        </authorList>
    </citation>
    <scope>NUCLEOTIDE SEQUENCE [LARGE SCALE MRNA] (ISOFORMS 2 AND 5)</scope>
</reference>
<reference key="6">
    <citation type="journal article" date="2007" name="BMC Genomics">
        <title>The full-ORF clone resource of the German cDNA consortium.</title>
        <authorList>
            <person name="Bechtel S."/>
            <person name="Rosenfelder H."/>
            <person name="Duda A."/>
            <person name="Schmidt C.P."/>
            <person name="Ernst U."/>
            <person name="Wellenreuther R."/>
            <person name="Mehrle A."/>
            <person name="Schuster C."/>
            <person name="Bahr A."/>
            <person name="Bloecker H."/>
            <person name="Heubner D."/>
            <person name="Hoerlein A."/>
            <person name="Michel G."/>
            <person name="Wedler H."/>
            <person name="Koehrer K."/>
            <person name="Ottenwaelder B."/>
            <person name="Poustka A."/>
            <person name="Wiemann S."/>
            <person name="Schupp I."/>
        </authorList>
    </citation>
    <scope>NUCLEOTIDE SEQUENCE [LARGE SCALE MRNA] OF 811-1871 (ISOFORM 2)</scope>
    <scope>NUCLEOTIDE SEQUENCE [LARGE SCALE MRNA] OF 826-1850 (ISOFORM 1)</scope>
    <scope>NUCLEOTIDE SEQUENCE [LARGE SCALE MRNA] OF 851-1871 (ISOFORM 4)</scope>
    <source>
        <tissue>Amygdala</tissue>
        <tissue>Testis</tissue>
    </source>
</reference>
<reference evidence="25" key="7">
    <citation type="journal article" date="2005" name="J. Biol. Chem.">
        <title>Identification and characterization of GIV, a novel Galpha i/s-interacting protein found on COPI, endoplasmic reticulum-Golgi transport vesicles.</title>
        <authorList>
            <person name="Le-Niculescu H."/>
            <person name="Niesman I."/>
            <person name="Fischer T."/>
            <person name="DeVries L."/>
            <person name="Farquhar M.G."/>
        </authorList>
    </citation>
    <scope>IDENTIFICATION</scope>
    <scope>SUBCELLULAR LOCATION</scope>
</reference>
<reference evidence="25" key="8">
    <citation type="journal article" date="2006" name="Ann. N. Y. Acad. Sci.">
        <title>Girdin, a novel actin-binding protein, and its family of proteins possess versatile functions in the Akt and Wnt signaling pathways.</title>
        <authorList>
            <person name="Enomoto A."/>
            <person name="Ping J."/>
            <person name="Takahashi M."/>
        </authorList>
    </citation>
    <scope>REVIEW</scope>
</reference>
<reference key="9">
    <citation type="journal article" date="2008" name="Proc. Natl. Acad. Sci. U.S.A.">
        <title>A quantitative atlas of mitotic phosphorylation.</title>
        <authorList>
            <person name="Dephoure N."/>
            <person name="Zhou C."/>
            <person name="Villen J."/>
            <person name="Beausoleil S.A."/>
            <person name="Bakalarski C.E."/>
            <person name="Elledge S.J."/>
            <person name="Gygi S.P."/>
        </authorList>
    </citation>
    <scope>PHOSPHORYLATION [LARGE SCALE ANALYSIS] AT SER-1387; THR-1673 AND SER-1837</scope>
    <scope>IDENTIFICATION BY MASS SPECTROMETRY [LARGE SCALE ANALYSIS]</scope>
    <source>
        <tissue>Cervix carcinoma</tissue>
    </source>
</reference>
<reference key="10">
    <citation type="journal article" date="2009" name="Proc. Natl. Acad. Sci. U.S.A.">
        <title>GIV is a nonreceptor GEF for G alpha i with a unique motif that regulates Akt signaling.</title>
        <authorList>
            <person name="Garcia-Marcos M."/>
            <person name="Ghosh P."/>
            <person name="Farquhar M.G."/>
        </authorList>
    </citation>
    <scope>FUNCTION</scope>
    <scope>INTERACTION WITH GNAI1; GNAI2 AND GNAI3</scope>
    <scope>GBA MOTIF</scope>
    <scope>MUTAGENESIS OF PHE-1686 AND GLU-1689</scope>
</reference>
<reference key="11">
    <citation type="journal article" date="2009" name="Sci. Signal.">
        <title>Quantitative phosphoproteomic analysis of T cell receptor signaling reveals system-wide modulation of protein-protein interactions.</title>
        <authorList>
            <person name="Mayya V."/>
            <person name="Lundgren D.H."/>
            <person name="Hwang S.-I."/>
            <person name="Rezaul K."/>
            <person name="Wu L."/>
            <person name="Eng J.K."/>
            <person name="Rodionov V."/>
            <person name="Han D.K."/>
        </authorList>
    </citation>
    <scope>IDENTIFICATION BY MASS SPECTROMETRY [LARGE SCALE ANALYSIS]</scope>
    <source>
        <tissue>Leukemic T-cell</tissue>
    </source>
</reference>
<reference key="12">
    <citation type="journal article" date="2010" name="Mol. Biol. Cell">
        <title>A G{alpha}i-GIV molecular complex binds epidermal growth factor receptor and determines whether cells migrate or proliferate.</title>
        <authorList>
            <person name="Ghosh P."/>
            <person name="Beas A.O."/>
            <person name="Bornheimer S.J."/>
            <person name="Garcia-Marcos M."/>
            <person name="Forry E.P."/>
            <person name="Johannson C."/>
            <person name="Ear J."/>
            <person name="Jung B.H."/>
            <person name="Cabrera B."/>
            <person name="Carethers J.M."/>
            <person name="Farquhar M.G."/>
        </authorList>
    </citation>
    <scope>FUNCTION</scope>
    <scope>IDENTIFICATION IN COMPLEX WITH EGFR AND GNAI3</scope>
    <scope>MUTAGENESIS OF PHE-1686</scope>
</reference>
<reference key="13">
    <citation type="journal article" date="2010" name="Sci. Signal.">
        <title>Quantitative phosphoproteomics reveals widespread full phosphorylation site occupancy during mitosis.</title>
        <authorList>
            <person name="Olsen J.V."/>
            <person name="Vermeulen M."/>
            <person name="Santamaria A."/>
            <person name="Kumar C."/>
            <person name="Miller M.L."/>
            <person name="Jensen L.J."/>
            <person name="Gnad F."/>
            <person name="Cox J."/>
            <person name="Jensen T.S."/>
            <person name="Nigg E.A."/>
            <person name="Brunak S."/>
            <person name="Mann M."/>
        </authorList>
    </citation>
    <scope>IDENTIFICATION BY MASS SPECTROMETRY [LARGE SCALE ANALYSIS]</scope>
    <source>
        <tissue>Cervix carcinoma</tissue>
    </source>
</reference>
<reference key="14">
    <citation type="journal article" date="2011" name="BMC Syst. Biol.">
        <title>Initial characterization of the human central proteome.</title>
        <authorList>
            <person name="Burkard T.R."/>
            <person name="Planyavsky M."/>
            <person name="Kaupe I."/>
            <person name="Breitwieser F.P."/>
            <person name="Buerckstuemmer T."/>
            <person name="Bennett K.L."/>
            <person name="Superti-Furga G."/>
            <person name="Colinge J."/>
        </authorList>
    </citation>
    <scope>IDENTIFICATION BY MASS SPECTROMETRY [LARGE SCALE ANALYSIS]</scope>
</reference>
<reference key="15">
    <citation type="journal article" date="2011" name="Sci. Signal.">
        <title>Tyrosine phosphorylation of the Galpha-interacting protein GIV promotes activation of phosphoinositide 3-kinase during cell migration.</title>
        <authorList>
            <person name="Lin C."/>
            <person name="Ear J."/>
            <person name="Pavlova Y."/>
            <person name="Mittal Y."/>
            <person name="Kufareva I."/>
            <person name="Ghassemian M."/>
            <person name="Abagyan R."/>
            <person name="Garcia-Marcos M."/>
            <person name="Ghosh P."/>
        </authorList>
    </citation>
    <scope>FUNCTION</scope>
    <scope>INTERACTION WITH GNAI3 AND PIK3R1</scope>
    <scope>PHOSPHORYLATION AT TYR-1765 AND TYR-1799</scope>
    <scope>MUTAGENESIS OF SER-1417; TYR-1765 AND TYR-1799</scope>
</reference>
<reference key="16">
    <citation type="journal article" date="2011" name="Sci. Signal.">
        <title>System-wide temporal characterization of the proteome and phosphoproteome of human embryonic stem cell differentiation.</title>
        <authorList>
            <person name="Rigbolt K.T."/>
            <person name="Prokhorova T.A."/>
            <person name="Akimov V."/>
            <person name="Henningsen J."/>
            <person name="Johansen P.T."/>
            <person name="Kratchmarova I."/>
            <person name="Kassem M."/>
            <person name="Mann M."/>
            <person name="Olsen J.V."/>
            <person name="Blagoev B."/>
        </authorList>
    </citation>
    <scope>IDENTIFICATION BY MASS SPECTROMETRY [LARGE SCALE ANALYSIS]</scope>
</reference>
<reference key="17">
    <citation type="journal article" date="2013" name="J. Proteome Res.">
        <title>Toward a comprehensive characterization of a human cancer cell phosphoproteome.</title>
        <authorList>
            <person name="Zhou H."/>
            <person name="Di Palma S."/>
            <person name="Preisinger C."/>
            <person name="Peng M."/>
            <person name="Polat A.N."/>
            <person name="Heck A.J."/>
            <person name="Mohammed S."/>
        </authorList>
    </citation>
    <scope>PHOSPHORYLATION [LARGE SCALE ANALYSIS] AT SER-233; SER-449; SER-1020; SER-1387; SER-1417; THR-1421; SER-1717 AND SER-1820</scope>
    <scope>IDENTIFICATION BY MASS SPECTROMETRY [LARGE SCALE ANALYSIS]</scope>
    <source>
        <tissue>Cervix carcinoma</tissue>
        <tissue>Erythroleukemia</tissue>
    </source>
</reference>
<reference key="18">
    <citation type="journal article" date="2013" name="Proc. Natl. Acad. Sci. U.S.A.">
        <title>Protein kinase C-theta (PKCtheta) phosphorylates and inhibits the guanine exchange factor, GIV/Girdin.</title>
        <authorList>
            <person name="Lopez-Sanchez I."/>
            <person name="Garcia-Marcos M."/>
            <person name="Mittal Y."/>
            <person name="Aznar N."/>
            <person name="Farquhar M.G."/>
            <person name="Ghosh P."/>
        </authorList>
    </citation>
    <scope>FUNCTION</scope>
    <scope>INTERACTION WITH GNAI3 AND PRKCQ</scope>
    <scope>PHOSPHORYLATION AT SER-1690</scope>
    <scope>MUTAGENESIS OF PHE-1686 AND SER-1690</scope>
</reference>
<reference key="19">
    <citation type="journal article" date="2014" name="J. Proteomics">
        <title>An enzyme assisted RP-RPLC approach for in-depth analysis of human liver phosphoproteome.</title>
        <authorList>
            <person name="Bian Y."/>
            <person name="Song C."/>
            <person name="Cheng K."/>
            <person name="Dong M."/>
            <person name="Wang F."/>
            <person name="Huang J."/>
            <person name="Sun D."/>
            <person name="Wang L."/>
            <person name="Ye M."/>
            <person name="Zou H."/>
        </authorList>
    </citation>
    <scope>IDENTIFICATION BY MASS SPECTROMETRY [LARGE SCALE ANALYSIS]</scope>
    <source>
        <tissue>Liver</tissue>
    </source>
</reference>
<reference key="20">
    <citation type="journal article" date="2014" name="Mol. Biol. Cell">
        <title>Structural basis for activation of trimeric Gi proteins by multiple growth factor receptors via GIV/Girdin.</title>
        <authorList>
            <person name="Lin C."/>
            <person name="Ear J."/>
            <person name="Midde K."/>
            <person name="Lopez-Sanchez I."/>
            <person name="Aznar N."/>
            <person name="Garcia-Marcos M."/>
            <person name="Kufareva I."/>
            <person name="Abagyan R."/>
            <person name="Ghosh P."/>
        </authorList>
    </citation>
    <scope>FUNCTION</scope>
    <scope>INTERACTION WITH EGFR; GNAI3; INSR AND KDR</scope>
    <scope>SH2-LIKE REGION</scope>
    <scope>MUTAGENESIS OF LYS-1723; LYS-1725; ARG-1746; LYS-1750; PHE-1766 AND GLN-1778</scope>
</reference>
<reference key="21">
    <citation type="journal article" date="2016" name="J. Biol. Chem.">
        <title>Membrane recruitment of the non-receptor protein GIV/Girdin (Galpha-interacting, Vesicle-associated Protein/Girdin) is sufficient for activating heterotrimeric G protein signaling.</title>
        <authorList>
            <person name="Parag-Sharma K."/>
            <person name="Leyme A."/>
            <person name="DiGiacomo V."/>
            <person name="Marivin A."/>
            <person name="Broselid S."/>
            <person name="Garcia-Marcos M."/>
        </authorList>
    </citation>
    <scope>SUBCELLULAR LOCATION</scope>
</reference>
<reference key="22">
    <citation type="journal article" date="2016" name="Proc. Natl. Acad. Sci. U.S.A.">
        <title>GIV/Girdin activates Galphai and inhibits Galphas via the same motif.</title>
        <authorList>
            <person name="Gupta V."/>
            <person name="Bhandari D."/>
            <person name="Leyme A."/>
            <person name="Aznar N."/>
            <person name="Midde K.K."/>
            <person name="Lo I.C."/>
            <person name="Ear J."/>
            <person name="Niesman I."/>
            <person name="Lopez-Sanchez I."/>
            <person name="Blanco-Canosa J.B."/>
            <person name="von Zastrow M."/>
            <person name="Garcia-Marcos M."/>
            <person name="Farquhar M.G."/>
            <person name="Ghosh P."/>
        </authorList>
    </citation>
    <scope>FUNCTION</scope>
    <scope>INTERACTION WITH GNAI3 AND GNAS</scope>
    <scope>PHOSPHORYLATION AT SER-1675 AND SER-1690</scope>
    <scope>MUTAGENESIS OF SER-1675; PHE-1686 AND SER-1690</scope>
</reference>
<reference key="23">
    <citation type="journal article" date="2016" name="Brain">
        <title>CCDC88A mutations cause PEHO-like syndrome in humans and mouse.</title>
        <authorList>
            <person name="Nahorski M.S."/>
            <person name="Asai M."/>
            <person name="Wakeling E."/>
            <person name="Parker A."/>
            <person name="Asai N."/>
            <person name="Canham N."/>
            <person name="Holder S.E."/>
            <person name="Chen Y.C."/>
            <person name="Dyer J."/>
            <person name="Brady A.F."/>
            <person name="Takahashi M."/>
            <person name="Woods C.G."/>
        </authorList>
    </citation>
    <scope>INVOLVEMENT IN PEHOL</scope>
</reference>
<reference key="24">
    <citation type="journal article" date="2016" name="Dev. Cell">
        <title>A Conserved role for girdin in basal body positioning and ciliogenesis.</title>
        <authorList>
            <person name="Nechipurenko I.V."/>
            <person name="Olivier-Mason A."/>
            <person name="Kazatskaya A."/>
            <person name="Kennedy J."/>
            <person name="McLachlan I.G."/>
            <person name="Heiman M.G."/>
            <person name="Blacque O.E."/>
            <person name="Sengupta P."/>
        </authorList>
    </citation>
    <scope>FUNCTION</scope>
    <scope>SUBCELLULAR LOCATION</scope>
</reference>
<reference key="25">
    <citation type="journal article" date="2018" name="J. Biol. Chem.">
        <title>A biochemical and genetic discovery pipeline identifies PLCdelta4b as a nonreceptor activator of heterotrimeric G-proteins.</title>
        <authorList>
            <person name="Maziarz M."/>
            <person name="Broselid S."/>
            <person name="DiGiacomo V."/>
            <person name="Park J.C."/>
            <person name="Luebbers A."/>
            <person name="Garcia-Navarrete L."/>
            <person name="Blanco-Canosa J.B."/>
            <person name="Baillie G.S."/>
            <person name="Garcia-Marcos M."/>
        </authorList>
    </citation>
    <scope>GBA MOTIF</scope>
</reference>
<reference evidence="31" key="26">
    <citation type="journal article" date="2019" name="Proc. Natl. Acad. Sci. U.S.A.">
        <title>Structural basis for GPCR-independent activation of heterotrimeric Gi proteins.</title>
        <authorList>
            <person name="Kalogriopoulos N.A."/>
            <person name="Rees S.D."/>
            <person name="Ngo T."/>
            <person name="Kopcho N.J."/>
            <person name="Ilatovskiy A.V."/>
            <person name="Sun N."/>
            <person name="Komives E.A."/>
            <person name="Chang G."/>
            <person name="Ghosh P."/>
            <person name="Kufareva I."/>
        </authorList>
    </citation>
    <scope>X-RAY CRYSTALLOGRAPHY (2.00 ANGSTROMS) OF 1672-1702 IN COMPLEX WITH RAT GNAI3</scope>
    <scope>MUTAGENESIS OF GLN-1684</scope>
</reference>
<reference key="27">
    <citation type="journal article" date="2019" name="Proc. Natl. Acad. Sci. U.S.A.">
        <authorList>
            <person name="Kalogriopoulos N.A."/>
            <person name="Rees S.D."/>
            <person name="Ngo T."/>
            <person name="Kopcho N.J."/>
            <person name="Ilatovskiy A.V."/>
            <person name="Sun N."/>
            <person name="Komives E.A."/>
            <person name="Chang G."/>
            <person name="Ghosh P."/>
            <person name="Kufareva I."/>
        </authorList>
    </citation>
    <scope>ERRATUM OF PUBMED:31363053</scope>
</reference>
<evidence type="ECO:0000250" key="1">
    <source>
        <dbReference type="UniProtKB" id="Q5SNZ0"/>
    </source>
</evidence>
<evidence type="ECO:0000255" key="2"/>
<evidence type="ECO:0000255" key="3">
    <source>
        <dbReference type="PROSITE-ProRule" id="PRU00044"/>
    </source>
</evidence>
<evidence type="ECO:0000256" key="4">
    <source>
        <dbReference type="SAM" id="MobiDB-lite"/>
    </source>
</evidence>
<evidence type="ECO:0000269" key="5">
    <source>
    </source>
</evidence>
<evidence type="ECO:0000269" key="6">
    <source>
    </source>
</evidence>
<evidence type="ECO:0000269" key="7">
    <source>
    </source>
</evidence>
<evidence type="ECO:0000269" key="8">
    <source>
    </source>
</evidence>
<evidence type="ECO:0000269" key="9">
    <source>
    </source>
</evidence>
<evidence type="ECO:0000269" key="10">
    <source>
    </source>
</evidence>
<evidence type="ECO:0000269" key="11">
    <source>
    </source>
</evidence>
<evidence type="ECO:0000269" key="12">
    <source>
    </source>
</evidence>
<evidence type="ECO:0000269" key="13">
    <source>
    </source>
</evidence>
<evidence type="ECO:0000269" key="14">
    <source>
    </source>
</evidence>
<evidence type="ECO:0000269" key="15">
    <source>
    </source>
</evidence>
<evidence type="ECO:0000269" key="16">
    <source>
    </source>
</evidence>
<evidence type="ECO:0000269" key="17">
    <source>
    </source>
</evidence>
<evidence type="ECO:0000269" key="18">
    <source>
    </source>
</evidence>
<evidence type="ECO:0000269" key="19">
    <source>
    </source>
</evidence>
<evidence type="ECO:0000303" key="20">
    <source>
    </source>
</evidence>
<evidence type="ECO:0000303" key="21">
    <source>
    </source>
</evidence>
<evidence type="ECO:0000303" key="22">
    <source>
    </source>
</evidence>
<evidence type="ECO:0000303" key="23">
    <source>
    </source>
</evidence>
<evidence type="ECO:0000303" key="24">
    <source ref="3"/>
</evidence>
<evidence type="ECO:0000305" key="25"/>
<evidence type="ECO:0000312" key="26">
    <source>
        <dbReference type="EMBL" id="AAI32737.1"/>
    </source>
</evidence>
<evidence type="ECO:0000312" key="27">
    <source>
        <dbReference type="EMBL" id="AAX82029.1"/>
    </source>
</evidence>
<evidence type="ECO:0000312" key="28">
    <source>
        <dbReference type="EMBL" id="BAE44387.1"/>
    </source>
</evidence>
<evidence type="ECO:0000312" key="29">
    <source>
        <dbReference type="EMBL" id="BAF44475.1"/>
    </source>
</evidence>
<evidence type="ECO:0000312" key="30">
    <source>
        <dbReference type="HGNC" id="HGNC:25523"/>
    </source>
</evidence>
<evidence type="ECO:0007744" key="31">
    <source>
        <dbReference type="PDB" id="6MHF"/>
    </source>
</evidence>
<evidence type="ECO:0007744" key="32">
    <source>
    </source>
</evidence>
<evidence type="ECO:0007744" key="33">
    <source>
    </source>
</evidence>
<evidence type="ECO:0007829" key="34">
    <source>
        <dbReference type="PDB" id="6MHF"/>
    </source>
</evidence>
<feature type="chain" id="PRO_0000287429" description="Girdin">
    <location>
        <begin position="1"/>
        <end position="1871"/>
    </location>
</feature>
<feature type="domain" description="Calponin-homology (CH)" evidence="3">
    <location>
        <begin position="12"/>
        <end position="132"/>
    </location>
</feature>
<feature type="region of interest" description="Disordered" evidence="4">
    <location>
        <begin position="816"/>
        <end position="842"/>
    </location>
</feature>
<feature type="region of interest" description="Disordered" evidence="4">
    <location>
        <begin position="1010"/>
        <end position="1035"/>
    </location>
</feature>
<feature type="region of interest" description="Phosphoinositide-binding" evidence="8">
    <location>
        <begin position="1390"/>
        <end position="1408"/>
    </location>
</feature>
<feature type="region of interest" description="Disordered" evidence="4">
    <location>
        <begin position="1407"/>
        <end position="1459"/>
    </location>
</feature>
<feature type="region of interest" description="Disordered" evidence="4">
    <location>
        <begin position="1559"/>
        <end position="1601"/>
    </location>
</feature>
<feature type="region of interest" description="SH2-like; required for interaction with growth factor receptors" evidence="13">
    <location>
        <begin position="1713"/>
        <end position="1823"/>
    </location>
</feature>
<feature type="region of interest" description="Disordered" evidence="4">
    <location>
        <begin position="1736"/>
        <end position="1871"/>
    </location>
</feature>
<feature type="coiled-coil region" evidence="2">
    <location>
        <begin position="196"/>
        <end position="425"/>
    </location>
</feature>
<feature type="coiled-coil region" evidence="2">
    <location>
        <begin position="458"/>
        <end position="1385"/>
    </location>
</feature>
<feature type="short sequence motif" description="GBA" evidence="18">
    <location>
        <begin position="1672"/>
        <end position="1702"/>
    </location>
</feature>
<feature type="compositionally biased region" description="Basic and acidic residues" evidence="4">
    <location>
        <begin position="1026"/>
        <end position="1035"/>
    </location>
</feature>
<feature type="compositionally biased region" description="Basic and acidic residues" evidence="4">
    <location>
        <begin position="1407"/>
        <end position="1416"/>
    </location>
</feature>
<feature type="compositionally biased region" description="Polar residues" evidence="4">
    <location>
        <begin position="1417"/>
        <end position="1430"/>
    </location>
</feature>
<feature type="compositionally biased region" description="Polar residues" evidence="4">
    <location>
        <begin position="1445"/>
        <end position="1459"/>
    </location>
</feature>
<feature type="compositionally biased region" description="Polar residues" evidence="4">
    <location>
        <begin position="1559"/>
        <end position="1578"/>
    </location>
</feature>
<feature type="compositionally biased region" description="Basic and acidic residues" evidence="4">
    <location>
        <begin position="1743"/>
        <end position="1763"/>
    </location>
</feature>
<feature type="compositionally biased region" description="Polar residues" evidence="4">
    <location>
        <begin position="1787"/>
        <end position="1799"/>
    </location>
</feature>
<feature type="compositionally biased region" description="Polar residues" evidence="4">
    <location>
        <begin position="1807"/>
        <end position="1818"/>
    </location>
</feature>
<feature type="compositionally biased region" description="Basic and acidic residues" evidence="4">
    <location>
        <begin position="1820"/>
        <end position="1830"/>
    </location>
</feature>
<feature type="compositionally biased region" description="Low complexity" evidence="4">
    <location>
        <begin position="1838"/>
        <end position="1851"/>
    </location>
</feature>
<feature type="compositionally biased region" description="Basic and acidic residues" evidence="4">
    <location>
        <begin position="1854"/>
        <end position="1871"/>
    </location>
</feature>
<feature type="modified residue" description="Phosphoserine" evidence="33">
    <location>
        <position position="233"/>
    </location>
</feature>
<feature type="modified residue" description="Phosphoserine" evidence="1">
    <location>
        <position position="237"/>
    </location>
</feature>
<feature type="modified residue" description="Phosphoserine" evidence="33">
    <location>
        <position position="449"/>
    </location>
</feature>
<feature type="modified residue" description="Phosphoserine" evidence="33">
    <location>
        <position position="1020"/>
    </location>
</feature>
<feature type="modified residue" description="Phosphoserine" evidence="32 33">
    <location>
        <position position="1387"/>
    </location>
</feature>
<feature type="modified residue" description="Phosphoserine; by PKB/AKT1" evidence="8 33">
    <location>
        <position position="1417"/>
    </location>
</feature>
<feature type="modified residue" description="Phosphothreonine" evidence="33">
    <location>
        <position position="1421"/>
    </location>
</feature>
<feature type="modified residue" description="Phosphothreonine" evidence="32">
    <location>
        <position position="1673"/>
    </location>
</feature>
<feature type="modified residue" description="Phosphoserine" evidence="15">
    <location>
        <position position="1675"/>
    </location>
</feature>
<feature type="modified residue" description="Phosphoserine; by PKC/PRKCQ" evidence="12 15">
    <location>
        <position position="1690"/>
    </location>
</feature>
<feature type="modified residue" description="Phosphoserine" evidence="33">
    <location>
        <position position="1717"/>
    </location>
</feature>
<feature type="modified residue" description="Phosphotyrosine" evidence="11">
    <location>
        <position position="1765"/>
    </location>
</feature>
<feature type="modified residue" description="Phosphotyrosine" evidence="11">
    <location>
        <position position="1799"/>
    </location>
</feature>
<feature type="modified residue" description="Phosphoserine" evidence="33">
    <location>
        <position position="1820"/>
    </location>
</feature>
<feature type="modified residue" description="Phosphoserine" evidence="32">
    <location>
        <position position="1837"/>
    </location>
</feature>
<feature type="splice variant" id="VSP_040129" description="In isoform 3, isoform 4 and isoform 5." evidence="20 22 23">
    <location>
        <position position="952"/>
    </location>
</feature>
<feature type="splice variant" id="VSP_052409" description="In isoform 2 and isoform 4." evidence="20 21 23 24">
    <original>MVALKRLPFLRNRPKDKDKMKACYRRSMS</original>
    <variation>T</variation>
    <location>
        <begin position="1463"/>
        <end position="1491"/>
    </location>
</feature>
<feature type="splice variant" id="VSP_044943" description="In isoform 5." evidence="20">
    <location>
        <begin position="1733"/>
        <end position="1806"/>
    </location>
</feature>
<feature type="mutagenesis site" description="Phosphorylation-deficient mutant which disrupts actin organization, cell migration and lamellipodia formation but has no effect on tyrosine phosphorylation." evidence="8 11">
    <original>S</original>
    <variation>A</variation>
    <location>
        <position position="1417"/>
    </location>
</feature>
<feature type="mutagenesis site" description="Phosphomimetic mutant which has no effect on tyrosine phosphorylation." evidence="11">
    <original>S</original>
    <variation>D</variation>
    <location>
        <position position="1417"/>
    </location>
</feature>
<feature type="mutagenesis site" description="Phosphorylation-deficient mutant which disrupts binding to GNAI3 and GNAS." evidence="15">
    <original>S</original>
    <variation>A</variation>
    <location>
        <position position="1675"/>
    </location>
</feature>
<feature type="mutagenesis site" description="Phosphomimetic mutant which results in slight increase in binding to GNAI3 and GNAS. Increased inhibition of GNAS; when associated with D-1690." evidence="15">
    <original>S</original>
    <variation>D</variation>
    <location>
        <position position="1675"/>
    </location>
</feature>
<feature type="mutagenesis site" description="No effect on guanine nucleotide exchange factor activity." evidence="19">
    <original>Q</original>
    <variation>A</variation>
    <location>
        <position position="1684"/>
    </location>
</feature>
<feature type="mutagenesis site" description="Abolishes interaction with and activation of GNAI3 and also abolishes recruitment of GNAI3 to EGFR. Reduced EGFR autophosphorylation and SH2 adapter recruitment, reduced localization of EGFR at the cell membrane following ligand stimulation with increased endosomal localization, reduced cell migration and increased cell proliferation. Abolishes enhancement of AKT signaling. Abolishes interaction with GNAS." evidence="9 10 12 15">
    <original>F</original>
    <variation>A</variation>
    <location>
        <position position="1686"/>
    </location>
</feature>
<feature type="mutagenesis site" description="Abolishes interaction with GNAI3." evidence="9">
    <original>E</original>
    <variation>A</variation>
    <location>
        <position position="1689"/>
    </location>
</feature>
<feature type="mutagenesis site" description="Phosphorylation-deficient mutant which retains the ability to bind GNAI3." evidence="12">
    <original>S</original>
    <variation>A</variation>
    <location>
        <position position="1690"/>
    </location>
</feature>
<feature type="mutagenesis site" description="Phosphomimetic mutant which abolishes interaction with GNAI3, inhibits guanine nucleotide exchange factor activity, inhibits cell migration and triggers cell proliferation. Retains ability to bind to GNAS. Increased inhibition of GNAS; when associated with D-1675." evidence="12 15">
    <original>S</original>
    <variation>D</variation>
    <location>
        <position position="1690"/>
    </location>
</feature>
<feature type="mutagenesis site" description="Abolishes binding to phosphorylated EGFR." evidence="13">
    <original>K</original>
    <variation>E</variation>
    <location>
        <position position="1723"/>
    </location>
</feature>
<feature type="mutagenesis site" description="Does not affect binding to phosphorylated EGFR." evidence="13">
    <original>K</original>
    <variation>E</variation>
    <location>
        <position position="1725"/>
    </location>
</feature>
<feature type="mutagenesis site" description="Abolishes binding to phosphorylated EGFR." evidence="13">
    <original>R</original>
    <variation>K</variation>
    <variation>L</variation>
    <location>
        <position position="1746"/>
    </location>
</feature>
<feature type="mutagenesis site" description="Abolishes binding to phosphorylated EGFR." evidence="13">
    <original>K</original>
    <variation>E</variation>
    <location>
        <position position="1750"/>
    </location>
</feature>
<feature type="mutagenesis site" description="Abolishes phosphorylation and leads to reduced AKT phosphorylation, impaired formation of actin stress fibers and impaired cell migration abolishes interaction with PIK3R1 and activation of PI3K, reduces phosphorylation of Ser-1417 but does not affect interaction with or activation of GNAI3; when associated with F-1799." evidence="11">
    <original>Y</original>
    <variation>F</variation>
    <location>
        <position position="1765"/>
    </location>
</feature>
<feature type="mutagenesis site" description="Increases binding to phosphorylated EGFR." evidence="13">
    <original>F</original>
    <variation>T</variation>
    <location>
        <position position="1766"/>
    </location>
</feature>
<feature type="mutagenesis site" description="Abolishes binding to phosphorylated EGFR." evidence="13">
    <original>Q</original>
    <variation>E</variation>
    <location>
        <position position="1778"/>
    </location>
</feature>
<feature type="mutagenesis site" description="Abolishes phosphorylation and leads to reduced AKT phosphorylation, impaired formation of actin stress fibers and impaired cell migration, abolishes interaction with PIK3R1 and activation of PI3K activity, reduces phosphorylation of Ser-1417 but does not affect interaction with or activation of GNAI3; when associated with F-1765." evidence="11">
    <original>Y</original>
    <variation>F</variation>
    <location>
        <position position="1799"/>
    </location>
</feature>
<feature type="sequence conflict" description="In Ref. 6; CAI46020." evidence="25" ref="6">
    <original>K</original>
    <variation>E</variation>
    <location>
        <position position="1066"/>
    </location>
</feature>
<feature type="sequence conflict" description="In Ref. 6; CAD97945." evidence="25" ref="6">
    <original>A</original>
    <variation>T</variation>
    <location>
        <position position="1081"/>
    </location>
</feature>
<feature type="sequence conflict" description="In Ref. 6; CAD97945." evidence="25" ref="6">
    <original>S</original>
    <variation>P</variation>
    <location>
        <position position="1661"/>
    </location>
</feature>
<feature type="sequence conflict" description="In Ref. 6; CAI46020." evidence="25" ref="6">
    <original>V</original>
    <variation>I</variation>
    <location>
        <position position="1710"/>
    </location>
</feature>
<feature type="sequence conflict" description="In Ref. 6; CAD98038." evidence="25" ref="6">
    <original>Y</original>
    <variation>H</variation>
    <location>
        <position position="1799"/>
    </location>
</feature>
<feature type="sequence conflict" description="In Ref. 6; CAI46020." evidence="25" ref="6">
    <original>D</original>
    <variation>G</variation>
    <location>
        <position position="1836"/>
    </location>
</feature>
<feature type="strand" evidence="34">
    <location>
        <begin position="1679"/>
        <end position="1682"/>
    </location>
</feature>
<feature type="helix" evidence="34">
    <location>
        <begin position="1683"/>
        <end position="1690"/>
    </location>
</feature>
<proteinExistence type="evidence at protein level"/>
<gene>
    <name type="primary">CCDC88A</name>
    <name evidence="29" type="synonym">APE</name>
    <name type="synonym">GRDN</name>
    <name evidence="26 30" type="synonym">KIAA1212</name>
</gene>
<organism>
    <name type="scientific">Homo sapiens</name>
    <name type="common">Human</name>
    <dbReference type="NCBI Taxonomy" id="9606"/>
    <lineage>
        <taxon>Eukaryota</taxon>
        <taxon>Metazoa</taxon>
        <taxon>Chordata</taxon>
        <taxon>Craniata</taxon>
        <taxon>Vertebrata</taxon>
        <taxon>Euteleostomi</taxon>
        <taxon>Mammalia</taxon>
        <taxon>Eutheria</taxon>
        <taxon>Euarchontoglires</taxon>
        <taxon>Primates</taxon>
        <taxon>Haplorrhini</taxon>
        <taxon>Catarrhini</taxon>
        <taxon>Hominidae</taxon>
        <taxon>Homo</taxon>
    </lineage>
</organism>
<comment type="function">
    <text evidence="1 7 8 9 10 11 12 13 15 16">Bifunctional modulator of guanine nucleotide-binding proteins (G proteins) (PubMed:19211784, PubMed:27621449). Acts as a non-receptor guanine nucleotide exchange factor which binds to and activates guanine nucleotide-binding protein G(i) alpha subunits (PubMed:19211784, PubMed:21954290, PubMed:23509302, PubMed:25187647). Also acts as a guanine nucleotide dissociation inhibitor for guanine nucleotide-binding protein G(s) subunit alpha GNAS (PubMed:27621449). Essential for cell migration (PubMed:16139227, PubMed:19211784, PubMed:20462955, PubMed:21954290). Interacts in complex with G(i) alpha subunits with the EGFR receptor, retaining EGFR at the cell membrane following ligand stimulation and promoting EGFR signaling which triggers cell migration (PubMed:20462955). Binding to Gi-alpha subunits displaces the beta and gamma subunits from the heterotrimeric G-protein complex which enhances phosphoinositide 3-kinase (PI3K)-dependent phosphorylation and kinase activity of AKT1/PKB (PubMed:19211784). Phosphorylation of AKT1/PKB induces the phosphorylation of downstream effectors GSK3 and FOXO1/FKHR, and regulates DNA replication and cell proliferation (By similarity). Binds in its tyrosine-phosphorylated form to the phosphatidylinositol 3-kinase (PI3K) regulatory subunit PIK3R1 which enables recruitment of PIK3R1 to the EGFR receptor, enhancing PI3K activity and cell migration (PubMed:21954290). Plays a role as a key modulator of the AKT-mTOR signaling pathway, controlling the tempo of the process of newborn neuron integration during adult neurogenesis, including correct neuron positioning, dendritic development and synapse formation (By similarity). Inhibition of G(s) subunit alpha GNAS leads to reduced cellular levels of cAMP and suppression of cell proliferation (PubMed:27621449). Essential for the integrity of the actin cytoskeleton (PubMed:16139227, PubMed:19211784). Required for formation of actin stress fibers and lamellipodia (PubMed:15882442). May be involved in membrane sorting in the early endosome (PubMed:15882442). Plays a role in ciliogenesis and cilium morphology and positioning and this may partly be through regulation of the localization of scaffolding protein CROCC/Rootletin (PubMed:27623382).</text>
</comment>
<comment type="subunit">
    <text evidence="1 8 9 10 11 12 13 15 19">Homodimer (PubMed:16139227). Interacts (via GBA motif) with guanine nucleotide-binding protein G(i) alpha subunits GNAI1, GNAI2 and GNAI3 (PubMed:19211784, PubMed:21954290, PubMed:23509302, PubMed:27621449, PubMed:31363053). Also interacts (via GNA motif) with guanine nucleotide-binding protein G(s) alpha subunit GNAS (PubMed:27621449). Interaction with G(i) alpha subunits occurs before interaction with GNAS and is regulated by phosphorylation; phosphorylation at Ser-1675 enhances binding to G(i) alpha subunits while phosphorylation at Ser-1690 abolishes G(i) alpha subunit binding, promoting binding to GNAS (PubMed:27621449). Interacts (via C-terminal SH2-like region) with growth factor receptors EGFR, INSR and KDR/VEGFR2 (via their autophosphorylated cytoplasmic tails) (PubMed:25187647). Forms a complex with EGFR and GNAI3 which leads to enhanced EGFR signaling and triggering of cell migration; ligand stimulation is required for recruitment of GNAI3 to the complex (PubMed:20462955, PubMed:25187647). Interacts (tyrosine-phosphorylated form) with phosphatidylinositol 3-kinase (PI3K) regulatory subunit PIK3R1/p85a (via SH2 domains); the interaction enables recruitment of PIK3R1 to the EGFR receptor, enhancing PI3K activity and cell migration (PubMed:21954290). Interacts with serine/threonine-protein kinase PRKCQ; the interaction leads to phosphorylation of CCDC88A and inhibition of its guanine nucleotide exchange factor activity (PubMed:23509302). Interacts (via C-terminus) with DISC1; the interaction is direct (By similarity). Interacts with AKT proteins; the interaction is inhibited in the presence of DISC1 (By similarity). Interacts with AKT1/PKB (via C-terminus) (PubMed:16139227). The non-phosphorylated form interacts with phosphatidylinositol 4-phosphate [PI(4)P] and weakly with phosphatidylinositol 3-phosphate [PI(3)P] (PubMed:16139227). Interacts with microtubules (By similarity). Interacts with actin (PubMed:16139227).</text>
</comment>
<comment type="subcellular location">
    <subcellularLocation>
        <location evidence="7 8 17">Cell membrane</location>
        <topology evidence="25">Peripheral membrane protein</topology>
    </subcellularLocation>
    <subcellularLocation>
        <location evidence="7 17">Cytoplasm</location>
        <location evidence="7 17">Cytosol</location>
    </subcellularLocation>
    <subcellularLocation>
        <location evidence="6 7 8">Cytoplasmic vesicle</location>
    </subcellularLocation>
    <subcellularLocation>
        <location evidence="7">Cell projection</location>
        <location evidence="7">Lamellipodium</location>
    </subcellularLocation>
    <subcellularLocation>
        <location evidence="16">Cytoplasm</location>
        <location evidence="16">Cytoskeleton</location>
        <location evidence="16">Cilium basal body</location>
    </subcellularLocation>
    <subcellularLocation>
        <location evidence="16">Cytoplasm</location>
        <location evidence="16">Cytoskeleton</location>
        <location evidence="16">Microtubule organizing center</location>
        <location evidence="16">Centrosome</location>
        <location evidence="16">Centriole</location>
    </subcellularLocation>
    <text evidence="7 8 17">Localizes to the cytosol in unstimulated cells while EGF stimulation promotes membrane localization and guanine nucleotide exchange factor activity (PubMed:27864364). Localizes to the cell membrane through interaction with phosphoinositides (PubMed:15882442, PubMed:16139227).</text>
</comment>
<comment type="alternative products">
    <event type="alternative splicing"/>
    <isoform>
        <id>Q3V6T2-1</id>
        <name evidence="8">1</name>
        <sequence type="displayed"/>
    </isoform>
    <isoform>
        <id>Q3V6T2-2</id>
        <name evidence="5 7">2</name>
        <sequence type="described" ref="VSP_052409"/>
    </isoform>
    <isoform>
        <id>Q3V6T2-3</id>
        <name>3</name>
        <sequence type="described" ref="VSP_040129"/>
    </isoform>
    <isoform>
        <id>Q3V6T2-4</id>
        <name>4</name>
        <sequence type="described" ref="VSP_040129 VSP_052409"/>
    </isoform>
    <isoform>
        <id>Q3V6T2-5</id>
        <name>5</name>
        <sequence type="described" ref="VSP_040129 VSP_044943"/>
    </isoform>
</comment>
<comment type="tissue specificity">
    <text evidence="8">Expressed ubiquitously.</text>
</comment>
<comment type="domain">
    <text evidence="9 18">The GBA (G-alpha binding and activating) motif mediates binding to the alpha subunits of guanine nucleotide-binding proteins (G proteins).</text>
</comment>
<comment type="domain">
    <text evidence="13">In the presence of tyrosine-autophosphorylated growth factor receptors, the C-terminus folds into an SH2-like region which promotes the stable recruitment of CCDC88A to the growth factor receptors. The SH2-like region is phosphorylated by the growth factor receptors prior to completion of folding.</text>
</comment>
<comment type="PTM">
    <text evidence="8 11 12">Phosphorylation is induced by epidermal growth factor (EGF) in a phosphoinositide 3-kinase (PI3K)-dependent manner (PubMed:16139227). Phosphorylation by AKT1/PKB is necessary for delocalization from the cell membrane and for cell migration (PubMed:16139227). Phosphorylated on tyrosine residues which promotes binding to phosphatidylinositol 3-kinase (PI3K) regulatory subunit PIK3R1/p85a and enhances PI3K activity (PubMed:21954290). Tyrosine-phosphorylated by both receptor and non-receptor tyrosine kinases in vitro (PubMed:21954290). Tyrosine phosphorylation is required for AKT1-dependent phosphorylation of Ser-1417 (PubMed:21954290). Phosphorylation at Ser-1690 by PRKCQ disrupts interaction with GNAI3 and inhibits guanine nucleotide exchange factor activity (PubMed:23509302).</text>
</comment>
<comment type="disease" evidence="14">
    <disease id="DI-05012">
        <name>PEHO-like syndrome</name>
        <acronym>PEHOL</acronym>
        <description>An autosomal recessive syndrome characterized by microcephaly and moderately severe hypotonia manifesting at birth, seizures that progress into infantile spasms with hypsarrhythmia, brain atrophy with bilateral polymicrogyria and pachygyria, thin corpus callosum, and mild reduction in cerebellar vermis volume. Patients also display optic atrophy, severe cognitive delay, puffiness of the maxillary region of the face, and edema of the dorsum of the hands and feet.</description>
        <dbReference type="MIM" id="617507"/>
    </disease>
    <text>The disease is caused by variants affecting the gene represented in this entry.</text>
</comment>
<comment type="similarity">
    <text evidence="25">Belongs to the CCDC88 family.</text>
</comment>
<comment type="sequence caution" evidence="25">
    <conflict type="erroneous initiation">
        <sequence resource="EMBL-CDS" id="AAY14932"/>
    </conflict>
    <text>Truncated N-terminus.</text>
</comment>
<comment type="sequence caution" evidence="25">
    <conflict type="miscellaneous discrepancy">
        <sequence resource="EMBL-CDS" id="CAD97945"/>
    </conflict>
    <text>Intron retention at the C-terminus.</text>
</comment>
<comment type="sequence caution" evidence="25">
    <conflict type="erroneous initiation">
        <sequence resource="EMBL-CDS" id="CAI46020"/>
    </conflict>
    <text>Truncated N-terminus.</text>
</comment>
<sequence length="1871" mass="216042">MENEIFTPLLEQFMTSPLVTWVKTFGPLAAGNGTNLDEYVALVDGVFLNQVMLQINPKLESQRVNKKVNNDASLRMHNLSILVRQIKFYYQETLQQLIMMSLPNVLIIGKNPFSEQGTEEVKKLLLLLLGCAVQCQKKEEFIERIQGLDFDTKAAVAAHIQEVTHNQENVFDLQWMEVTDMSQEDIEPLLKNMALHLKRLIDERDEHSETIIELSEERDGLHFLPHASSSAQSPCGSPGMKRTESRQHLSVELADAKAKIRRLRQELEEKTEQLLDCKQELEQMEIELKRLQQENMNLLSDARSARMYRDELDALREKAVRVDKLESEVSRYKERLHDIEFYKARVEELKEDNQVLLETKTMLEDQLEGTRARSDKLHELEKENLQLKAKLHDMEMERDMDRKKIEELMEENMTLEMAQKQSMDESLHLGWELEQISRTSELSEAPQKSLGHEVNELTSSRLLKLEMENQSLTKTVEELRTTVDSVEGNASKILKMEKENQRLSKKVEILENEIVQEKQSLQNCQNLSKDLMKEKAQLEKTIETLRENSERQIKILEQENEHLNQTVSSLRQRSQISAEARVKDIEKENKILHESIKETSSKLSKIEFEKRQIKKELEHYKEKGERAEELENELHHLEKENELLQKKITNLKITCEKIEALEQENSELERENRKLKKTLDSFKNLTFQLESLEKENSQLDEENLELRRNVESLKCASMKMAQLQLENKELESEKEQLKKGLELLKASFKKTERLEVSYQGLDIENQRLQKTLENSNKKIQQLESELQDLEMENQTLQKNLEELKISSKRLEQLEKENKSLEQETSQLEKDKKQLEKENKRLRQQAEIKDTTLEENNVKIGNLEKENKTLSKEIGIYKESCVRLKELEKENKELVKRATIDIKTLVTLREDLVSEKLKTQQMNNDLEKLTHELEKIGLNKERLLHDEQSTDDSRYKLLESKLESTLKKSLEIKEEKIAALEARLEESTNYNQQLRQELKTVKKNYEALKQRQDEERMVQSSPPISGEDNKWERESQETTRELLKVKDRLIEVERNNATLQAEKQALKTQLKQLETQNNNLQAQILALQRQTVSLQEQNTTLQTQNAKLQVENSTLNSQSTSLMNQNAQLLIQQSSLENENESVIKEREDLKSLYDSLIKDHEKLELLHERQASEYESLISKHGTLKSAHKNLEVEHRDLEDRYNQLLKQKGQLEDLEKMLKVEQEKMLLENKNHETVAAEYKKLCGENDRLNHTYSQLLKETEVLQTDHKNLKSLLNNSKLEQTRLEAEFSKLKEQYQQLDITSTKLNNQCELLSQLKGNLEEENRHLLDQIQTLMLQNRTLLEQNMESKDLFHVEQRQYIDKLNELRRQKEKLEEKIMDQYKFYDPSPPRRRGNWITLKMRKLIKSKKDINRERQKSLTLTPTRSDSSEGFLQLPHQDSQDSSSVGSNSLEDGQTLGTKKSSMVALKRLPFLRNRPKDKDKMKACYRRSMSMNDLVQSMVLAGQWTGSTENLEVPDDISTGKRRKELGAMAFSTTAINFSTVNSSAGFRSKQLVNNKDTTSFEDISPQGVSDDSSTGSRVHASRPASLDSGRTSTSNSNNNASLHEVKAGAVNNQSRPQSHSSGEFSLLHDHEAWSSSGSSPIQYLKRQTRSSPVLQHKISETLESRHHKIKTGSPGSEVVTLQQFLEESNKLTSVQIKSSSQENLLDEVMKSLSVSSDFLGKDKPVSCGLARSVSGKTPGDFYDRRTTKPEFLRPGPRKTEDTYFISSAGKPTPGTQGKIKLVKESSLSRQSKDSNPYATLPRASSVISTAEGTTRRTSIHDFLTKDSRLPISVDSPPAAADSNTTAASNVDKVQESRNSKSRSREQQSS</sequence>
<protein>
    <recommendedName>
        <fullName>Girdin</fullName>
    </recommendedName>
    <alternativeName>
        <fullName>Akt phosphorylation enhancer</fullName>
        <shortName>APE</shortName>
    </alternativeName>
    <alternativeName>
        <fullName>Coiled-coil domain-containing protein 88A</fullName>
    </alternativeName>
    <alternativeName>
        <fullName>G alpha-interacting vesicle-associated protein</fullName>
        <shortName>GIV</shortName>
    </alternativeName>
    <alternativeName>
        <fullName>Girders of actin filament</fullName>
    </alternativeName>
    <alternativeName>
        <fullName>Hook-related protein 1</fullName>
        <shortName>HkRP1</shortName>
    </alternativeName>
</protein>
<accession>Q3V6T2</accession>
<accession>A1IGE7</accession>
<accession>B7ZM78</accession>
<accession>C9JG83</accession>
<accession>Q53SF1</accession>
<accession>Q581G3</accession>
<accession>Q5HYD0</accession>
<accession>Q7Z339</accession>
<accession>Q7Z3C5</accession>
<dbReference type="EMBL" id="AB201172">
    <property type="protein sequence ID" value="BAE44387.1"/>
    <property type="molecule type" value="mRNA"/>
</dbReference>
<dbReference type="EMBL" id="AB125644">
    <property type="protein sequence ID" value="BAF44475.1"/>
    <property type="molecule type" value="mRNA"/>
</dbReference>
<dbReference type="EMBL" id="AC019198">
    <property type="protein sequence ID" value="AAY14932.1"/>
    <property type="status" value="ALT_INIT"/>
    <property type="molecule type" value="Genomic_DNA"/>
</dbReference>
<dbReference type="EMBL" id="AC092176">
    <property type="protein sequence ID" value="AAX82029.1"/>
    <property type="molecule type" value="Genomic_DNA"/>
</dbReference>
<dbReference type="EMBL" id="AC012358">
    <property type="status" value="NOT_ANNOTATED_CDS"/>
    <property type="molecule type" value="Genomic_DNA"/>
</dbReference>
<dbReference type="EMBL" id="BC132736">
    <property type="protein sequence ID" value="AAI32737.1"/>
    <property type="molecule type" value="mRNA"/>
</dbReference>
<dbReference type="EMBL" id="BC144320">
    <property type="protein sequence ID" value="AAI44321.1"/>
    <property type="molecule type" value="mRNA"/>
</dbReference>
<dbReference type="EMBL" id="BX537985">
    <property type="protein sequence ID" value="CAD97945.1"/>
    <property type="status" value="ALT_SEQ"/>
    <property type="molecule type" value="mRNA"/>
</dbReference>
<dbReference type="EMBL" id="BX538154">
    <property type="protein sequence ID" value="CAD98038.1"/>
    <property type="molecule type" value="mRNA"/>
</dbReference>
<dbReference type="EMBL" id="BX648138">
    <property type="protein sequence ID" value="CAI46020.1"/>
    <property type="status" value="ALT_INIT"/>
    <property type="molecule type" value="mRNA"/>
</dbReference>
<dbReference type="CCDS" id="CCDS33203.1">
    <molecule id="Q3V6T2-2"/>
</dbReference>
<dbReference type="CCDS" id="CCDS46288.1">
    <molecule id="Q3V6T2-3"/>
</dbReference>
<dbReference type="CCDS" id="CCDS58710.1">
    <molecule id="Q3V6T2-5"/>
</dbReference>
<dbReference type="CCDS" id="CCDS92755.1">
    <molecule id="Q3V6T2-1"/>
</dbReference>
<dbReference type="RefSeq" id="NP_001129069.1">
    <molecule id="Q3V6T2-3"/>
    <property type="nucleotide sequence ID" value="NM_001135597.2"/>
</dbReference>
<dbReference type="RefSeq" id="NP_001241872.1">
    <molecule id="Q3V6T2-5"/>
    <property type="nucleotide sequence ID" value="NM_001254943.2"/>
</dbReference>
<dbReference type="RefSeq" id="NP_001352409.1">
    <molecule id="Q3V6T2-1"/>
    <property type="nucleotide sequence ID" value="NM_001365480.1"/>
</dbReference>
<dbReference type="RefSeq" id="NP_060554.3">
    <molecule id="Q3V6T2-2"/>
    <property type="nucleotide sequence ID" value="NM_018084.4"/>
</dbReference>
<dbReference type="RefSeq" id="XP_011531267.1">
    <property type="nucleotide sequence ID" value="XM_011532965.2"/>
</dbReference>
<dbReference type="RefSeq" id="XP_011531268.1">
    <property type="nucleotide sequence ID" value="XM_011532966.2"/>
</dbReference>
<dbReference type="RefSeq" id="XP_011531269.1">
    <property type="nucleotide sequence ID" value="XM_011532967.2"/>
</dbReference>
<dbReference type="PDB" id="6MHF">
    <property type="method" value="X-ray"/>
    <property type="resolution" value="2.00 A"/>
    <property type="chains" value="C=1672-1702"/>
</dbReference>
<dbReference type="PDBsum" id="6MHF"/>
<dbReference type="SMR" id="Q3V6T2"/>
<dbReference type="BioGRID" id="120829">
    <property type="interactions" value="232"/>
</dbReference>
<dbReference type="CORUM" id="Q3V6T2"/>
<dbReference type="DIP" id="DIP-50784N"/>
<dbReference type="FunCoup" id="Q3V6T2">
    <property type="interactions" value="2934"/>
</dbReference>
<dbReference type="IntAct" id="Q3V6T2">
    <property type="interactions" value="116"/>
</dbReference>
<dbReference type="MINT" id="Q3V6T2"/>
<dbReference type="STRING" id="9606.ENSP00000338728"/>
<dbReference type="GlyGen" id="Q3V6T2">
    <property type="glycosylation" value="7 sites, 4 N-linked glycans (4 sites), 1 O-linked glycan (2 sites)"/>
</dbReference>
<dbReference type="iPTMnet" id="Q3V6T2"/>
<dbReference type="PhosphoSitePlus" id="Q3V6T2"/>
<dbReference type="SwissPalm" id="Q3V6T2"/>
<dbReference type="BioMuta" id="CCDC88A"/>
<dbReference type="DMDM" id="147644956"/>
<dbReference type="jPOST" id="Q3V6T2"/>
<dbReference type="MassIVE" id="Q3V6T2"/>
<dbReference type="PaxDb" id="9606-ENSP00000338728"/>
<dbReference type="PeptideAtlas" id="Q3V6T2"/>
<dbReference type="ProteomicsDB" id="61886">
    <molecule id="Q3V6T2-1"/>
</dbReference>
<dbReference type="ProteomicsDB" id="61887">
    <molecule id="Q3V6T2-2"/>
</dbReference>
<dbReference type="ProteomicsDB" id="61888">
    <molecule id="Q3V6T2-3"/>
</dbReference>
<dbReference type="ProteomicsDB" id="61889">
    <molecule id="Q3V6T2-4"/>
</dbReference>
<dbReference type="ProteomicsDB" id="7248"/>
<dbReference type="Pumba" id="Q3V6T2"/>
<dbReference type="Antibodypedia" id="47423">
    <property type="antibodies" value="253 antibodies from 35 providers"/>
</dbReference>
<dbReference type="DNASU" id="55704"/>
<dbReference type="Ensembl" id="ENST00000263630.13">
    <molecule id="Q3V6T2-2"/>
    <property type="protein sequence ID" value="ENSP00000263630.8"/>
    <property type="gene ID" value="ENSG00000115355.18"/>
</dbReference>
<dbReference type="Ensembl" id="ENST00000336838.10">
    <molecule id="Q3V6T2-3"/>
    <property type="protein sequence ID" value="ENSP00000338728.6"/>
    <property type="gene ID" value="ENSG00000115355.18"/>
</dbReference>
<dbReference type="Ensembl" id="ENST00000436346.7">
    <molecule id="Q3V6T2-1"/>
    <property type="protein sequence ID" value="ENSP00000410608.1"/>
    <property type="gene ID" value="ENSG00000115355.18"/>
</dbReference>
<dbReference type="Ensembl" id="ENST00000642200.1">
    <molecule id="Q3V6T2-1"/>
    <property type="protein sequence ID" value="ENSP00000495919.1"/>
    <property type="gene ID" value="ENSG00000115355.18"/>
</dbReference>
<dbReference type="Ensembl" id="ENST00000643413.1">
    <molecule id="Q3V6T2-4"/>
    <property type="protein sequence ID" value="ENSP00000494811.1"/>
    <property type="gene ID" value="ENSG00000115355.18"/>
</dbReference>
<dbReference type="Ensembl" id="ENST00000646796.1">
    <molecule id="Q3V6T2-5"/>
    <property type="protein sequence ID" value="ENSP00000493703.1"/>
    <property type="gene ID" value="ENSG00000115355.18"/>
</dbReference>
<dbReference type="GeneID" id="55704"/>
<dbReference type="KEGG" id="hsa:55704"/>
<dbReference type="MANE-Select" id="ENST00000436346.7">
    <property type="protein sequence ID" value="ENSP00000410608.1"/>
    <property type="RefSeq nucleotide sequence ID" value="NM_001365480.1"/>
    <property type="RefSeq protein sequence ID" value="NP_001352409.1"/>
</dbReference>
<dbReference type="UCSC" id="uc002ryv.3">
    <molecule id="Q3V6T2-1"/>
    <property type="organism name" value="human"/>
</dbReference>
<dbReference type="AGR" id="HGNC:25523"/>
<dbReference type="CTD" id="55704"/>
<dbReference type="DisGeNET" id="55704"/>
<dbReference type="GeneCards" id="CCDC88A"/>
<dbReference type="HGNC" id="HGNC:25523">
    <property type="gene designation" value="CCDC88A"/>
</dbReference>
<dbReference type="HPA" id="ENSG00000115355">
    <property type="expression patterns" value="Tissue enhanced (brain, testis)"/>
</dbReference>
<dbReference type="MalaCards" id="CCDC88A"/>
<dbReference type="MIM" id="609736">
    <property type="type" value="gene"/>
</dbReference>
<dbReference type="MIM" id="617507">
    <property type="type" value="phenotype"/>
</dbReference>
<dbReference type="neXtProt" id="NX_Q3V6T2"/>
<dbReference type="OpenTargets" id="ENSG00000115355"/>
<dbReference type="Orphanet" id="99807">
    <property type="disease" value="PEHO-like syndrome"/>
</dbReference>
<dbReference type="PharmGKB" id="PA162381751"/>
<dbReference type="VEuPathDB" id="HostDB:ENSG00000115355"/>
<dbReference type="eggNOG" id="KOG4643">
    <property type="taxonomic scope" value="Eukaryota"/>
</dbReference>
<dbReference type="GeneTree" id="ENSGT00940000155559"/>
<dbReference type="HOGENOM" id="CLU_001421_1_0_1"/>
<dbReference type="InParanoid" id="Q3V6T2"/>
<dbReference type="OMA" id="XEEKTEQ"/>
<dbReference type="OrthoDB" id="10254988at2759"/>
<dbReference type="PAN-GO" id="Q3V6T2">
    <property type="GO annotations" value="6 GO annotations based on evolutionary models"/>
</dbReference>
<dbReference type="PhylomeDB" id="Q3V6T2"/>
<dbReference type="TreeFam" id="TF320231"/>
<dbReference type="PathwayCommons" id="Q3V6T2"/>
<dbReference type="Reactome" id="R-HSA-9696264">
    <property type="pathway name" value="RND3 GTPase cycle"/>
</dbReference>
<dbReference type="Reactome" id="R-HSA-9696273">
    <property type="pathway name" value="RND1 GTPase cycle"/>
</dbReference>
<dbReference type="SignaLink" id="Q3V6T2"/>
<dbReference type="SIGNOR" id="Q3V6T2"/>
<dbReference type="BioGRID-ORCS" id="55704">
    <property type="hits" value="18 hits in 1162 CRISPR screens"/>
</dbReference>
<dbReference type="CD-CODE" id="8C2F96ED">
    <property type="entry name" value="Centrosome"/>
</dbReference>
<dbReference type="ChiTaRS" id="CCDC88A">
    <property type="organism name" value="human"/>
</dbReference>
<dbReference type="GeneWiki" id="CCDC88A"/>
<dbReference type="GenomeRNAi" id="55704"/>
<dbReference type="Pharos" id="Q3V6T2">
    <property type="development level" value="Tbio"/>
</dbReference>
<dbReference type="PRO" id="PR:Q3V6T2"/>
<dbReference type="Proteomes" id="UP000005640">
    <property type="component" value="Chromosome 2"/>
</dbReference>
<dbReference type="RNAct" id="Q3V6T2">
    <property type="molecule type" value="protein"/>
</dbReference>
<dbReference type="Bgee" id="ENSG00000115355">
    <property type="expression patterns" value="Expressed in medial globus pallidus and 162 other cell types or tissues"/>
</dbReference>
<dbReference type="ExpressionAtlas" id="Q3V6T2">
    <property type="expression patterns" value="baseline and differential"/>
</dbReference>
<dbReference type="GO" id="GO:0005814">
    <property type="term" value="C:centriole"/>
    <property type="evidence" value="ECO:0000314"/>
    <property type="project" value="UniProtKB"/>
</dbReference>
<dbReference type="GO" id="GO:0005813">
    <property type="term" value="C:centrosome"/>
    <property type="evidence" value="ECO:0000314"/>
    <property type="project" value="HPA"/>
</dbReference>
<dbReference type="GO" id="GO:0036064">
    <property type="term" value="C:ciliary basal body"/>
    <property type="evidence" value="ECO:0000314"/>
    <property type="project" value="HPA"/>
</dbReference>
<dbReference type="GO" id="GO:0005737">
    <property type="term" value="C:cytoplasm"/>
    <property type="evidence" value="ECO:0000318"/>
    <property type="project" value="GO_Central"/>
</dbReference>
<dbReference type="GO" id="GO:0031410">
    <property type="term" value="C:cytoplasmic vesicle"/>
    <property type="evidence" value="ECO:0000314"/>
    <property type="project" value="UniProtKB"/>
</dbReference>
<dbReference type="GO" id="GO:0005829">
    <property type="term" value="C:cytosol"/>
    <property type="evidence" value="ECO:0000314"/>
    <property type="project" value="UniProtKB"/>
</dbReference>
<dbReference type="GO" id="GO:0005783">
    <property type="term" value="C:endoplasmic reticulum"/>
    <property type="evidence" value="ECO:0000314"/>
    <property type="project" value="UniProtKB"/>
</dbReference>
<dbReference type="GO" id="GO:0005794">
    <property type="term" value="C:Golgi apparatus"/>
    <property type="evidence" value="ECO:0000314"/>
    <property type="project" value="UniProtKB"/>
</dbReference>
<dbReference type="GO" id="GO:0030027">
    <property type="term" value="C:lamellipodium"/>
    <property type="evidence" value="ECO:0000314"/>
    <property type="project" value="UniProtKB"/>
</dbReference>
<dbReference type="GO" id="GO:0016020">
    <property type="term" value="C:membrane"/>
    <property type="evidence" value="ECO:0000314"/>
    <property type="project" value="UniProtKB"/>
</dbReference>
<dbReference type="GO" id="GO:0005654">
    <property type="term" value="C:nucleoplasm"/>
    <property type="evidence" value="ECO:0000314"/>
    <property type="project" value="HPA"/>
</dbReference>
<dbReference type="GO" id="GO:0005886">
    <property type="term" value="C:plasma membrane"/>
    <property type="evidence" value="ECO:0000314"/>
    <property type="project" value="HPA"/>
</dbReference>
<dbReference type="GO" id="GO:0003779">
    <property type="term" value="F:actin binding"/>
    <property type="evidence" value="ECO:0000314"/>
    <property type="project" value="UniProtKB"/>
</dbReference>
<dbReference type="GO" id="GO:0051959">
    <property type="term" value="F:dynein light intermediate chain binding"/>
    <property type="evidence" value="ECO:0000318"/>
    <property type="project" value="GO_Central"/>
</dbReference>
<dbReference type="GO" id="GO:0005154">
    <property type="term" value="F:epidermal growth factor receptor binding"/>
    <property type="evidence" value="ECO:0000353"/>
    <property type="project" value="UniProtKB"/>
</dbReference>
<dbReference type="GO" id="GO:0001965">
    <property type="term" value="F:G-protein alpha-subunit binding"/>
    <property type="evidence" value="ECO:0000353"/>
    <property type="project" value="UniProtKB"/>
</dbReference>
<dbReference type="GO" id="GO:0005092">
    <property type="term" value="F:GDP-dissociation inhibitor activity"/>
    <property type="evidence" value="ECO:0000314"/>
    <property type="project" value="UniProtKB"/>
</dbReference>
<dbReference type="GO" id="GO:0005085">
    <property type="term" value="F:guanyl-nucleotide exchange factor activity"/>
    <property type="evidence" value="ECO:0000314"/>
    <property type="project" value="UniProtKB"/>
</dbReference>
<dbReference type="GO" id="GO:0005158">
    <property type="term" value="F:insulin receptor binding"/>
    <property type="evidence" value="ECO:0000353"/>
    <property type="project" value="UniProtKB"/>
</dbReference>
<dbReference type="GO" id="GO:0008017">
    <property type="term" value="F:microtubule binding"/>
    <property type="evidence" value="ECO:0000250"/>
    <property type="project" value="UniProtKB"/>
</dbReference>
<dbReference type="GO" id="GO:0035091">
    <property type="term" value="F:phosphatidylinositol binding"/>
    <property type="evidence" value="ECO:0000314"/>
    <property type="project" value="UniProtKB"/>
</dbReference>
<dbReference type="GO" id="GO:0042803">
    <property type="term" value="F:protein homodimerization activity"/>
    <property type="evidence" value="ECO:0000353"/>
    <property type="project" value="UniProtKB"/>
</dbReference>
<dbReference type="GO" id="GO:0043422">
    <property type="term" value="F:protein kinase B binding"/>
    <property type="evidence" value="ECO:0000353"/>
    <property type="project" value="UniProtKB"/>
</dbReference>
<dbReference type="GO" id="GO:0005080">
    <property type="term" value="F:protein kinase C binding"/>
    <property type="evidence" value="ECO:0000353"/>
    <property type="project" value="UniProtKB"/>
</dbReference>
<dbReference type="GO" id="GO:0043539">
    <property type="term" value="F:protein serine/threonine kinase activator activity"/>
    <property type="evidence" value="ECO:0000250"/>
    <property type="project" value="UniProtKB"/>
</dbReference>
<dbReference type="GO" id="GO:0042169">
    <property type="term" value="F:SH2 domain binding"/>
    <property type="evidence" value="ECO:0000353"/>
    <property type="project" value="UniProtKB"/>
</dbReference>
<dbReference type="GO" id="GO:0043184">
    <property type="term" value="F:vascular endothelial growth factor receptor 2 binding"/>
    <property type="evidence" value="ECO:0000353"/>
    <property type="project" value="UniProtKB"/>
</dbReference>
<dbReference type="GO" id="GO:0032147">
    <property type="term" value="P:activation of protein kinase activity"/>
    <property type="evidence" value="ECO:0000314"/>
    <property type="project" value="UniProtKB"/>
</dbReference>
<dbReference type="GO" id="GO:0016477">
    <property type="term" value="P:cell migration"/>
    <property type="evidence" value="ECO:0000315"/>
    <property type="project" value="UniProtKB"/>
</dbReference>
<dbReference type="GO" id="GO:0031122">
    <property type="term" value="P:cytoplasmic microtubule organization"/>
    <property type="evidence" value="ECO:0000318"/>
    <property type="project" value="GO_Central"/>
</dbReference>
<dbReference type="GO" id="GO:0030705">
    <property type="term" value="P:cytoskeleton-dependent intracellular transport"/>
    <property type="evidence" value="ECO:0000318"/>
    <property type="project" value="GO_Central"/>
</dbReference>
<dbReference type="GO" id="GO:0030032">
    <property type="term" value="P:lamellipodium assembly"/>
    <property type="evidence" value="ECO:0000315"/>
    <property type="project" value="UniProtKB"/>
</dbReference>
<dbReference type="GO" id="GO:0072660">
    <property type="term" value="P:maintenance of protein location in plasma membrane"/>
    <property type="evidence" value="ECO:0000314"/>
    <property type="project" value="UniProtKB"/>
</dbReference>
<dbReference type="GO" id="GO:0061024">
    <property type="term" value="P:membrane organization"/>
    <property type="evidence" value="ECO:0000314"/>
    <property type="project" value="UniProtKB"/>
</dbReference>
<dbReference type="GO" id="GO:0007399">
    <property type="term" value="P:nervous system development"/>
    <property type="evidence" value="ECO:0007669"/>
    <property type="project" value="UniProtKB-KW"/>
</dbReference>
<dbReference type="GO" id="GO:0045724">
    <property type="term" value="P:positive regulation of cilium assembly"/>
    <property type="evidence" value="ECO:0000315"/>
    <property type="project" value="UniProtKB"/>
</dbReference>
<dbReference type="GO" id="GO:0045742">
    <property type="term" value="P:positive regulation of epidermal growth factor receptor signaling pathway"/>
    <property type="evidence" value="ECO:0000314"/>
    <property type="project" value="UniProtKB"/>
</dbReference>
<dbReference type="GO" id="GO:0051897">
    <property type="term" value="P:positive regulation of phosphatidylinositol 3-kinase/protein kinase B signal transduction"/>
    <property type="evidence" value="ECO:0000250"/>
    <property type="project" value="UniProtKB"/>
</dbReference>
<dbReference type="GO" id="GO:1903566">
    <property type="term" value="P:positive regulation of protein localization to cilium"/>
    <property type="evidence" value="ECO:0000315"/>
    <property type="project" value="UniProtKB"/>
</dbReference>
<dbReference type="GO" id="GO:0051496">
    <property type="term" value="P:positive regulation of stress fiber assembly"/>
    <property type="evidence" value="ECO:0000315"/>
    <property type="project" value="CACAO"/>
</dbReference>
<dbReference type="GO" id="GO:0032956">
    <property type="term" value="P:regulation of actin cytoskeleton organization"/>
    <property type="evidence" value="ECO:0000315"/>
    <property type="project" value="UniProtKB"/>
</dbReference>
<dbReference type="GO" id="GO:0042127">
    <property type="term" value="P:regulation of cell population proliferation"/>
    <property type="evidence" value="ECO:0000250"/>
    <property type="project" value="UniProtKB"/>
</dbReference>
<dbReference type="GO" id="GO:0010975">
    <property type="term" value="P:regulation of neuron projection development"/>
    <property type="evidence" value="ECO:0000250"/>
    <property type="project" value="UniProtKB"/>
</dbReference>
<dbReference type="GO" id="GO:0007264">
    <property type="term" value="P:small GTPase-mediated signal transduction"/>
    <property type="evidence" value="ECO:0000314"/>
    <property type="project" value="UniProtKB"/>
</dbReference>
<dbReference type="GO" id="GO:0031929">
    <property type="term" value="P:TOR signaling"/>
    <property type="evidence" value="ECO:0000250"/>
    <property type="project" value="UniProtKB"/>
</dbReference>
<dbReference type="CDD" id="cd22229">
    <property type="entry name" value="HkD_Girdin"/>
    <property type="match status" value="1"/>
</dbReference>
<dbReference type="FunFam" id="1.10.418.10:FF:000035">
    <property type="entry name" value="girdin isoform X1"/>
    <property type="match status" value="1"/>
</dbReference>
<dbReference type="Gene3D" id="1.10.418.10">
    <property type="entry name" value="Calponin-like domain"/>
    <property type="match status" value="1"/>
</dbReference>
<dbReference type="InterPro" id="IPR001715">
    <property type="entry name" value="CH_dom"/>
</dbReference>
<dbReference type="InterPro" id="IPR036872">
    <property type="entry name" value="CH_dom_sf"/>
</dbReference>
<dbReference type="InterPro" id="IPR043936">
    <property type="entry name" value="HOOK_N"/>
</dbReference>
<dbReference type="PANTHER" id="PTHR18947:SF30">
    <property type="entry name" value="GIRDIN"/>
    <property type="match status" value="1"/>
</dbReference>
<dbReference type="PANTHER" id="PTHR18947">
    <property type="entry name" value="HOOK PROTEINS"/>
    <property type="match status" value="1"/>
</dbReference>
<dbReference type="Pfam" id="PF19047">
    <property type="entry name" value="HOOK_N"/>
    <property type="match status" value="1"/>
</dbReference>
<dbReference type="SUPFAM" id="SSF116907">
    <property type="entry name" value="Hook domain"/>
    <property type="match status" value="1"/>
</dbReference>
<dbReference type="PROSITE" id="PS50021">
    <property type="entry name" value="CH"/>
    <property type="match status" value="1"/>
</dbReference>